<proteinExistence type="evidence at transcript level"/>
<sequence>MTILPKKKPNSSVGVSDHPDDPDRRTGSDPHQHQHQHSHGVRPGARPRASPPPWSYQAAPPASREDRRTESSSRPQQASPPPVGAGSSGGPGDATGMACVSGNRAELSGGVGCGGGMGGCCSGPGLSKRRRQATCSGGVAGGGTGPGAAGGGGGGGGGGGVGGPSPEQEEGAGYNSEDEYENASRLQSEDPATVEQQEHWFEKALQEKKGFVIKKMKEDGACLFRAVADQVYGDQDMHEVVRKHCMDYLMKNADYFSNYVTEDFTTYINRKRKNNCHGNHIEMQAMAEMYNRPVEVYQSGTEPINTFHGIHQNNDEPIRVSYHRNIHYNSVVNPNKATIGVGLGLPAFKPGFADQSLMKNAIKTSEESWIEQQMLEDKKRATDWEATNEAIEEQVARESYLQWLRDQEKQARQPRKASATCSSATAAASSGLEEWNARSPRQRSSAPSPEIPDPAHSDTAAKPPSPAGALALSKPPSPCAPGPSNQACVGPDRPTSSSLVSLYPALGYRAIMQEMSPTAFGLTDWEDDEILASVLAVSQQEYLDSMKKNAMHREPSPDSS</sequence>
<protein>
    <recommendedName>
        <fullName>OTU domain-containing protein 5-A</fullName>
        <ecNumber evidence="2">3.4.19.12</ecNumber>
    </recommendedName>
    <alternativeName>
        <fullName>Deubiquitinating enzyme A</fullName>
        <shortName>DUBA</shortName>
    </alternativeName>
</protein>
<comment type="function">
    <text evidence="2">Deubiquitinating enzyme that may function as negative regulator of the innate immune system. Has peptidase activity towards 'Lys-48'- and 'Lys-63'-linked polyubiquitin chains. Can also cleave 'Lys-11'-linked ubiquitin chains (in vitro) (By similarity).</text>
</comment>
<comment type="catalytic activity">
    <reaction evidence="2">
        <text>Thiol-dependent hydrolysis of ester, thioester, amide, peptide and isopeptide bonds formed by the C-terminal Gly of ubiquitin (a 76-residue protein attached to proteins as an intracellular targeting signal).</text>
        <dbReference type="EC" id="3.4.19.12"/>
    </reaction>
</comment>
<comment type="alternative products">
    <event type="alternative splicing"/>
    <isoform>
        <id>Q08BW0-1</id>
        <name>1</name>
        <sequence type="displayed"/>
    </isoform>
    <isoform>
        <id>Q08BW0-2</id>
        <name>2</name>
        <sequence type="described" ref="VSP_034009"/>
    </isoform>
</comment>
<comment type="similarity">
    <text evidence="6">Belongs to the peptidase C85 family.</text>
</comment>
<comment type="sequence caution" evidence="6">
    <conflict type="erroneous initiation">
        <sequence resource="EMBL-CDS" id="AAI55305"/>
    </conflict>
    <text>Truncated N-terminus.</text>
</comment>
<comment type="sequence caution" evidence="6">
    <conflict type="miscellaneous discrepancy">
        <sequence resource="EMBL-CDS" id="AAI55305"/>
    </conflict>
    <text>BC155304 contains a 74bp deletion, resulting in a frameshift.</text>
</comment>
<keyword id="KW-0025">Alternative splicing</keyword>
<keyword id="KW-0378">Hydrolase</keyword>
<keyword id="KW-0645">Protease</keyword>
<keyword id="KW-1185">Reference proteome</keyword>
<keyword id="KW-0788">Thiol protease</keyword>
<keyword id="KW-0833">Ubl conjugation pathway</keyword>
<organism>
    <name type="scientific">Danio rerio</name>
    <name type="common">Zebrafish</name>
    <name type="synonym">Brachydanio rerio</name>
    <dbReference type="NCBI Taxonomy" id="7955"/>
    <lineage>
        <taxon>Eukaryota</taxon>
        <taxon>Metazoa</taxon>
        <taxon>Chordata</taxon>
        <taxon>Craniata</taxon>
        <taxon>Vertebrata</taxon>
        <taxon>Euteleostomi</taxon>
        <taxon>Actinopterygii</taxon>
        <taxon>Neopterygii</taxon>
        <taxon>Teleostei</taxon>
        <taxon>Ostariophysi</taxon>
        <taxon>Cypriniformes</taxon>
        <taxon>Danionidae</taxon>
        <taxon>Danioninae</taxon>
        <taxon>Danio</taxon>
    </lineage>
</organism>
<name>OTU5A_DANRE</name>
<dbReference type="EC" id="3.4.19.12" evidence="2"/>
<dbReference type="EMBL" id="AL590148">
    <property type="protein sequence ID" value="CAD43417.1"/>
    <property type="molecule type" value="Genomic_DNA"/>
</dbReference>
<dbReference type="EMBL" id="CR450685">
    <property type="protein sequence ID" value="CAQ14391.1"/>
    <property type="molecule type" value="Genomic_DNA"/>
</dbReference>
<dbReference type="EMBL" id="CR450685">
    <property type="protein sequence ID" value="CAQ14392.1"/>
    <property type="molecule type" value="Genomic_DNA"/>
</dbReference>
<dbReference type="EMBL" id="BC124533">
    <property type="protein sequence ID" value="AAI24534.1"/>
    <property type="molecule type" value="mRNA"/>
</dbReference>
<dbReference type="EMBL" id="BC155304">
    <property type="protein sequence ID" value="AAI55305.1"/>
    <property type="status" value="ALT_SEQ"/>
    <property type="molecule type" value="mRNA"/>
</dbReference>
<dbReference type="RefSeq" id="NP_001068578.1">
    <molecule id="Q08BW0-1"/>
    <property type="nucleotide sequence ID" value="NM_001075110.1"/>
</dbReference>
<dbReference type="SMR" id="Q08BW0"/>
<dbReference type="FunCoup" id="Q08BW0">
    <property type="interactions" value="944"/>
</dbReference>
<dbReference type="STRING" id="7955.ENSDARP00000114334"/>
<dbReference type="MEROPS" id="C85.001"/>
<dbReference type="PaxDb" id="7955-ENSDARP00000114334"/>
<dbReference type="Ensembl" id="ENSDART00000144986">
    <molecule id="Q08BW0-1"/>
    <property type="protein sequence ID" value="ENSDARP00000114334"/>
    <property type="gene ID" value="ENSDARG00000059006"/>
</dbReference>
<dbReference type="GeneID" id="555459"/>
<dbReference type="KEGG" id="dre:555459"/>
<dbReference type="AGR" id="ZFIN:ZDB-GENE-030616-61"/>
<dbReference type="CTD" id="555459"/>
<dbReference type="ZFIN" id="ZDB-GENE-030616-61">
    <property type="gene designation" value="otud5a"/>
</dbReference>
<dbReference type="eggNOG" id="KOG2605">
    <property type="taxonomic scope" value="Eukaryota"/>
</dbReference>
<dbReference type="InParanoid" id="Q08BW0"/>
<dbReference type="OMA" id="NKMHRDP"/>
<dbReference type="OrthoDB" id="409956at2759"/>
<dbReference type="PhylomeDB" id="Q08BW0"/>
<dbReference type="TreeFam" id="TF326812"/>
<dbReference type="PRO" id="PR:Q08BW0"/>
<dbReference type="Proteomes" id="UP000000437">
    <property type="component" value="Chromosome 8"/>
</dbReference>
<dbReference type="Bgee" id="ENSDARG00000059006">
    <property type="expression patterns" value="Expressed in testis and 29 other cell types or tissues"/>
</dbReference>
<dbReference type="ExpressionAtlas" id="Q08BW0">
    <property type="expression patterns" value="baseline and differential"/>
</dbReference>
<dbReference type="GO" id="GO:0004843">
    <property type="term" value="F:cysteine-type deubiquitinase activity"/>
    <property type="evidence" value="ECO:0000250"/>
    <property type="project" value="UniProtKB"/>
</dbReference>
<dbReference type="GO" id="GO:0061578">
    <property type="term" value="F:K63-linked deubiquitinase activity"/>
    <property type="evidence" value="ECO:0000318"/>
    <property type="project" value="GO_Central"/>
</dbReference>
<dbReference type="GO" id="GO:0090090">
    <property type="term" value="P:negative regulation of canonical Wnt signaling pathway"/>
    <property type="evidence" value="ECO:0000318"/>
    <property type="project" value="GO_Central"/>
</dbReference>
<dbReference type="GO" id="GO:1904263">
    <property type="term" value="P:positive regulation of TORC1 signaling"/>
    <property type="evidence" value="ECO:0000318"/>
    <property type="project" value="GO_Central"/>
</dbReference>
<dbReference type="GO" id="GO:1904515">
    <property type="term" value="P:positive regulation of TORC2 signaling"/>
    <property type="evidence" value="ECO:0000318"/>
    <property type="project" value="GO_Central"/>
</dbReference>
<dbReference type="GO" id="GO:0071108">
    <property type="term" value="P:protein K48-linked deubiquitination"/>
    <property type="evidence" value="ECO:0000250"/>
    <property type="project" value="UniProtKB"/>
</dbReference>
<dbReference type="GO" id="GO:0070536">
    <property type="term" value="P:protein K63-linked deubiquitination"/>
    <property type="evidence" value="ECO:0000250"/>
    <property type="project" value="UniProtKB"/>
</dbReference>
<dbReference type="GO" id="GO:0006508">
    <property type="term" value="P:proteolysis"/>
    <property type="evidence" value="ECO:0007669"/>
    <property type="project" value="UniProtKB-KW"/>
</dbReference>
<dbReference type="GO" id="GO:0050776">
    <property type="term" value="P:regulation of immune response"/>
    <property type="evidence" value="ECO:0000318"/>
    <property type="project" value="GO_Central"/>
</dbReference>
<dbReference type="GO" id="GO:0032496">
    <property type="term" value="P:response to lipopolysaccharide"/>
    <property type="evidence" value="ECO:0000250"/>
    <property type="project" value="UniProtKB"/>
</dbReference>
<dbReference type="CDD" id="cd22752">
    <property type="entry name" value="OTU_OTUD5-like"/>
    <property type="match status" value="1"/>
</dbReference>
<dbReference type="FunFam" id="3.90.70.80:FF:000002">
    <property type="entry name" value="OTU domain-containing protein 5 isoform X2"/>
    <property type="match status" value="1"/>
</dbReference>
<dbReference type="Gene3D" id="3.90.70.80">
    <property type="match status" value="1"/>
</dbReference>
<dbReference type="InterPro" id="IPR003323">
    <property type="entry name" value="OTU_dom"/>
</dbReference>
<dbReference type="InterPro" id="IPR038765">
    <property type="entry name" value="Papain-like_cys_pep_sf"/>
</dbReference>
<dbReference type="InterPro" id="IPR050704">
    <property type="entry name" value="Peptidase_C85-like"/>
</dbReference>
<dbReference type="PANTHER" id="PTHR12419">
    <property type="entry name" value="OTU DOMAIN CONTAINING PROTEIN"/>
    <property type="match status" value="1"/>
</dbReference>
<dbReference type="PANTHER" id="PTHR12419:SF4">
    <property type="entry name" value="OTU DOMAIN-CONTAINING PROTEIN 5"/>
    <property type="match status" value="1"/>
</dbReference>
<dbReference type="Pfam" id="PF02338">
    <property type="entry name" value="OTU"/>
    <property type="match status" value="1"/>
</dbReference>
<dbReference type="SUPFAM" id="SSF54001">
    <property type="entry name" value="Cysteine proteinases"/>
    <property type="match status" value="1"/>
</dbReference>
<dbReference type="PROSITE" id="PS50802">
    <property type="entry name" value="OTU"/>
    <property type="match status" value="1"/>
</dbReference>
<accession>Q08BW0</accession>
<accession>A9JTE0</accession>
<accession>B0UYD0</accession>
<accession>B0UYD1</accession>
<accession>Q8JFX0</accession>
<reference key="1">
    <citation type="journal article" date="2013" name="Nature">
        <title>The zebrafish reference genome sequence and its relationship to the human genome.</title>
        <authorList>
            <person name="Howe K."/>
            <person name="Clark M.D."/>
            <person name="Torroja C.F."/>
            <person name="Torrance J."/>
            <person name="Berthelot C."/>
            <person name="Muffato M."/>
            <person name="Collins J.E."/>
            <person name="Humphray S."/>
            <person name="McLaren K."/>
            <person name="Matthews L."/>
            <person name="McLaren S."/>
            <person name="Sealy I."/>
            <person name="Caccamo M."/>
            <person name="Churcher C."/>
            <person name="Scott C."/>
            <person name="Barrett J.C."/>
            <person name="Koch R."/>
            <person name="Rauch G.J."/>
            <person name="White S."/>
            <person name="Chow W."/>
            <person name="Kilian B."/>
            <person name="Quintais L.T."/>
            <person name="Guerra-Assuncao J.A."/>
            <person name="Zhou Y."/>
            <person name="Gu Y."/>
            <person name="Yen J."/>
            <person name="Vogel J.H."/>
            <person name="Eyre T."/>
            <person name="Redmond S."/>
            <person name="Banerjee R."/>
            <person name="Chi J."/>
            <person name="Fu B."/>
            <person name="Langley E."/>
            <person name="Maguire S.F."/>
            <person name="Laird G.K."/>
            <person name="Lloyd D."/>
            <person name="Kenyon E."/>
            <person name="Donaldson S."/>
            <person name="Sehra H."/>
            <person name="Almeida-King J."/>
            <person name="Loveland J."/>
            <person name="Trevanion S."/>
            <person name="Jones M."/>
            <person name="Quail M."/>
            <person name="Willey D."/>
            <person name="Hunt A."/>
            <person name="Burton J."/>
            <person name="Sims S."/>
            <person name="McLay K."/>
            <person name="Plumb B."/>
            <person name="Davis J."/>
            <person name="Clee C."/>
            <person name="Oliver K."/>
            <person name="Clark R."/>
            <person name="Riddle C."/>
            <person name="Elliot D."/>
            <person name="Threadgold G."/>
            <person name="Harden G."/>
            <person name="Ware D."/>
            <person name="Begum S."/>
            <person name="Mortimore B."/>
            <person name="Kerry G."/>
            <person name="Heath P."/>
            <person name="Phillimore B."/>
            <person name="Tracey A."/>
            <person name="Corby N."/>
            <person name="Dunn M."/>
            <person name="Johnson C."/>
            <person name="Wood J."/>
            <person name="Clark S."/>
            <person name="Pelan S."/>
            <person name="Griffiths G."/>
            <person name="Smith M."/>
            <person name="Glithero R."/>
            <person name="Howden P."/>
            <person name="Barker N."/>
            <person name="Lloyd C."/>
            <person name="Stevens C."/>
            <person name="Harley J."/>
            <person name="Holt K."/>
            <person name="Panagiotidis G."/>
            <person name="Lovell J."/>
            <person name="Beasley H."/>
            <person name="Henderson C."/>
            <person name="Gordon D."/>
            <person name="Auger K."/>
            <person name="Wright D."/>
            <person name="Collins J."/>
            <person name="Raisen C."/>
            <person name="Dyer L."/>
            <person name="Leung K."/>
            <person name="Robertson L."/>
            <person name="Ambridge K."/>
            <person name="Leongamornlert D."/>
            <person name="McGuire S."/>
            <person name="Gilderthorp R."/>
            <person name="Griffiths C."/>
            <person name="Manthravadi D."/>
            <person name="Nichol S."/>
            <person name="Barker G."/>
            <person name="Whitehead S."/>
            <person name="Kay M."/>
            <person name="Brown J."/>
            <person name="Murnane C."/>
            <person name="Gray E."/>
            <person name="Humphries M."/>
            <person name="Sycamore N."/>
            <person name="Barker D."/>
            <person name="Saunders D."/>
            <person name="Wallis J."/>
            <person name="Babbage A."/>
            <person name="Hammond S."/>
            <person name="Mashreghi-Mohammadi M."/>
            <person name="Barr L."/>
            <person name="Martin S."/>
            <person name="Wray P."/>
            <person name="Ellington A."/>
            <person name="Matthews N."/>
            <person name="Ellwood M."/>
            <person name="Woodmansey R."/>
            <person name="Clark G."/>
            <person name="Cooper J."/>
            <person name="Tromans A."/>
            <person name="Grafham D."/>
            <person name="Skuce C."/>
            <person name="Pandian R."/>
            <person name="Andrews R."/>
            <person name="Harrison E."/>
            <person name="Kimberley A."/>
            <person name="Garnett J."/>
            <person name="Fosker N."/>
            <person name="Hall R."/>
            <person name="Garner P."/>
            <person name="Kelly D."/>
            <person name="Bird C."/>
            <person name="Palmer S."/>
            <person name="Gehring I."/>
            <person name="Berger A."/>
            <person name="Dooley C.M."/>
            <person name="Ersan-Urun Z."/>
            <person name="Eser C."/>
            <person name="Geiger H."/>
            <person name="Geisler M."/>
            <person name="Karotki L."/>
            <person name="Kirn A."/>
            <person name="Konantz J."/>
            <person name="Konantz M."/>
            <person name="Oberlander M."/>
            <person name="Rudolph-Geiger S."/>
            <person name="Teucke M."/>
            <person name="Lanz C."/>
            <person name="Raddatz G."/>
            <person name="Osoegawa K."/>
            <person name="Zhu B."/>
            <person name="Rapp A."/>
            <person name="Widaa S."/>
            <person name="Langford C."/>
            <person name="Yang F."/>
            <person name="Schuster S.C."/>
            <person name="Carter N.P."/>
            <person name="Harrow J."/>
            <person name="Ning Z."/>
            <person name="Herrero J."/>
            <person name="Searle S.M."/>
            <person name="Enright A."/>
            <person name="Geisler R."/>
            <person name="Plasterk R.H."/>
            <person name="Lee C."/>
            <person name="Westerfield M."/>
            <person name="de Jong P.J."/>
            <person name="Zon L.I."/>
            <person name="Postlethwait J.H."/>
            <person name="Nusslein-Volhard C."/>
            <person name="Hubbard T.J."/>
            <person name="Roest Crollius H."/>
            <person name="Rogers J."/>
            <person name="Stemple D.L."/>
        </authorList>
    </citation>
    <scope>NUCLEOTIDE SEQUENCE [LARGE SCALE GENOMIC DNA]</scope>
    <source>
        <strain>Tuebingen</strain>
    </source>
</reference>
<reference key="2">
    <citation type="submission" date="2007-11" db="EMBL/GenBank/DDBJ databases">
        <authorList>
            <consortium name="NIH - Zebrafish Gene Collection (ZGC) project"/>
        </authorList>
    </citation>
    <scope>NUCLEOTIDE SEQUENCE [LARGE SCALE MRNA] (ISOFORM 1)</scope>
    <source>
        <strain>WIK</strain>
        <tissue>Embryo</tissue>
        <tissue>Ovary</tissue>
    </source>
</reference>
<evidence type="ECO:0000250" key="1"/>
<evidence type="ECO:0000250" key="2">
    <source>
        <dbReference type="UniProtKB" id="Q96G74"/>
    </source>
</evidence>
<evidence type="ECO:0000255" key="3"/>
<evidence type="ECO:0000255" key="4">
    <source>
        <dbReference type="PROSITE-ProRule" id="PRU00139"/>
    </source>
</evidence>
<evidence type="ECO:0000256" key="5">
    <source>
        <dbReference type="SAM" id="MobiDB-lite"/>
    </source>
</evidence>
<evidence type="ECO:0000305" key="6"/>
<feature type="chain" id="PRO_0000278226" description="OTU domain-containing protein 5-A">
    <location>
        <begin position="1"/>
        <end position="560"/>
    </location>
</feature>
<feature type="domain" description="OTU" evidence="4">
    <location>
        <begin position="211"/>
        <end position="334"/>
    </location>
</feature>
<feature type="region of interest" description="Disordered" evidence="5">
    <location>
        <begin position="1"/>
        <end position="100"/>
    </location>
</feature>
<feature type="region of interest" description="Disordered" evidence="5">
    <location>
        <begin position="141"/>
        <end position="190"/>
    </location>
</feature>
<feature type="region of interest" description="Cys-loop" evidence="1">
    <location>
        <begin position="216"/>
        <end position="222"/>
    </location>
</feature>
<feature type="region of interest" description="Variable-loop" evidence="1">
    <location>
        <begin position="271"/>
        <end position="281"/>
    </location>
</feature>
<feature type="region of interest" description="His-loop" evidence="1">
    <location>
        <begin position="322"/>
        <end position="327"/>
    </location>
</feature>
<feature type="region of interest" description="Disordered" evidence="5">
    <location>
        <begin position="411"/>
        <end position="496"/>
    </location>
</feature>
<feature type="compositionally biased region" description="Basic and acidic residues" evidence="5">
    <location>
        <begin position="17"/>
        <end position="32"/>
    </location>
</feature>
<feature type="compositionally biased region" description="Gly residues" evidence="5">
    <location>
        <begin position="141"/>
        <end position="163"/>
    </location>
</feature>
<feature type="compositionally biased region" description="Low complexity" evidence="5">
    <location>
        <begin position="417"/>
        <end position="430"/>
    </location>
</feature>
<feature type="compositionally biased region" description="Low complexity" evidence="5">
    <location>
        <begin position="437"/>
        <end position="448"/>
    </location>
</feature>
<feature type="active site" evidence="3">
    <location>
        <position position="219"/>
    </location>
</feature>
<feature type="active site" description="Nucleophile" evidence="2">
    <location>
        <position position="222"/>
    </location>
</feature>
<feature type="active site" evidence="2">
    <location>
        <position position="327"/>
    </location>
</feature>
<feature type="splice variant" id="VSP_034009" description="In isoform 2." evidence="6">
    <location>
        <begin position="1"/>
        <end position="236"/>
    </location>
</feature>
<gene>
    <name type="primary">otud5a</name>
    <name type="synonym">otud5</name>
    <name type="ORF">si:dkey-83k24.3</name>
    <name type="ORF">si:rp71-30i22.1</name>
    <name type="ORF">zgc:154072</name>
</gene>